<proteinExistence type="inferred from homology"/>
<comment type="catalytic activity">
    <reaction evidence="1">
        <text>1-(5-phospho-beta-D-ribosyl)-ATP + H2O = 1-(5-phospho-beta-D-ribosyl)-5'-AMP + diphosphate + H(+)</text>
        <dbReference type="Rhea" id="RHEA:22828"/>
        <dbReference type="ChEBI" id="CHEBI:15377"/>
        <dbReference type="ChEBI" id="CHEBI:15378"/>
        <dbReference type="ChEBI" id="CHEBI:33019"/>
        <dbReference type="ChEBI" id="CHEBI:59457"/>
        <dbReference type="ChEBI" id="CHEBI:73183"/>
        <dbReference type="EC" id="3.6.1.31"/>
    </reaction>
</comment>
<comment type="pathway">
    <text evidence="1">Amino-acid biosynthesis; L-histidine biosynthesis; L-histidine from 5-phospho-alpha-D-ribose 1-diphosphate: step 2/9.</text>
</comment>
<comment type="subcellular location">
    <subcellularLocation>
        <location evidence="1">Cytoplasm</location>
    </subcellularLocation>
</comment>
<comment type="similarity">
    <text evidence="1">Belongs to the PRA-PH family.</text>
</comment>
<organism>
    <name type="scientific">Mycobacterium bovis (strain BCG / Tokyo 172 / ATCC 35737 / TMC 1019)</name>
    <dbReference type="NCBI Taxonomy" id="561275"/>
    <lineage>
        <taxon>Bacteria</taxon>
        <taxon>Bacillati</taxon>
        <taxon>Actinomycetota</taxon>
        <taxon>Actinomycetes</taxon>
        <taxon>Mycobacteriales</taxon>
        <taxon>Mycobacteriaceae</taxon>
        <taxon>Mycobacterium</taxon>
        <taxon>Mycobacterium tuberculosis complex</taxon>
    </lineage>
</organism>
<protein>
    <recommendedName>
        <fullName evidence="1">Phosphoribosyl-ATP pyrophosphatase</fullName>
        <shortName evidence="1">PRA-PH</shortName>
        <ecNumber evidence="1">3.6.1.31</ecNumber>
    </recommendedName>
</protein>
<accession>C1AQ38</accession>
<keyword id="KW-0028">Amino-acid biosynthesis</keyword>
<keyword id="KW-0067">ATP-binding</keyword>
<keyword id="KW-0963">Cytoplasm</keyword>
<keyword id="KW-0368">Histidine biosynthesis</keyword>
<keyword id="KW-0378">Hydrolase</keyword>
<keyword id="KW-0547">Nucleotide-binding</keyword>
<dbReference type="EC" id="3.6.1.31" evidence="1"/>
<dbReference type="EMBL" id="AP010918">
    <property type="protein sequence ID" value="BAH26417.1"/>
    <property type="molecule type" value="Genomic_DNA"/>
</dbReference>
<dbReference type="RefSeq" id="WP_003899180.1">
    <property type="nucleotide sequence ID" value="NZ_CP014566.1"/>
</dbReference>
<dbReference type="SMR" id="C1AQ38"/>
<dbReference type="KEGG" id="mbt:JTY_2133"/>
<dbReference type="HOGENOM" id="CLU_123337_2_1_11"/>
<dbReference type="UniPathway" id="UPA00031">
    <property type="reaction ID" value="UER00007"/>
</dbReference>
<dbReference type="GO" id="GO:0005737">
    <property type="term" value="C:cytoplasm"/>
    <property type="evidence" value="ECO:0007669"/>
    <property type="project" value="UniProtKB-SubCell"/>
</dbReference>
<dbReference type="GO" id="GO:0005524">
    <property type="term" value="F:ATP binding"/>
    <property type="evidence" value="ECO:0007669"/>
    <property type="project" value="UniProtKB-KW"/>
</dbReference>
<dbReference type="GO" id="GO:0004636">
    <property type="term" value="F:phosphoribosyl-ATP diphosphatase activity"/>
    <property type="evidence" value="ECO:0007669"/>
    <property type="project" value="UniProtKB-UniRule"/>
</dbReference>
<dbReference type="GO" id="GO:0000105">
    <property type="term" value="P:L-histidine biosynthetic process"/>
    <property type="evidence" value="ECO:0007669"/>
    <property type="project" value="UniProtKB-UniRule"/>
</dbReference>
<dbReference type="CDD" id="cd11547">
    <property type="entry name" value="NTP-PPase_HisE"/>
    <property type="match status" value="1"/>
</dbReference>
<dbReference type="FunFam" id="1.10.287.1080:FF:000005">
    <property type="entry name" value="Phosphoribosyl-ATP pyrophosphatase"/>
    <property type="match status" value="1"/>
</dbReference>
<dbReference type="Gene3D" id="1.10.287.1080">
    <property type="entry name" value="MazG-like"/>
    <property type="match status" value="1"/>
</dbReference>
<dbReference type="HAMAP" id="MF_01020">
    <property type="entry name" value="HisE"/>
    <property type="match status" value="1"/>
</dbReference>
<dbReference type="InterPro" id="IPR008179">
    <property type="entry name" value="HisE"/>
</dbReference>
<dbReference type="InterPro" id="IPR021130">
    <property type="entry name" value="PRib-ATP_PPHydrolase-like"/>
</dbReference>
<dbReference type="NCBIfam" id="TIGR03188">
    <property type="entry name" value="histidine_hisI"/>
    <property type="match status" value="1"/>
</dbReference>
<dbReference type="NCBIfam" id="NF001610">
    <property type="entry name" value="PRK00400.1-1"/>
    <property type="match status" value="1"/>
</dbReference>
<dbReference type="PANTHER" id="PTHR42945">
    <property type="entry name" value="HISTIDINE BIOSYNTHESIS BIFUNCTIONAL PROTEIN"/>
    <property type="match status" value="1"/>
</dbReference>
<dbReference type="PANTHER" id="PTHR42945:SF1">
    <property type="entry name" value="HISTIDINE BIOSYNTHESIS BIFUNCTIONAL PROTEIN HIS7"/>
    <property type="match status" value="1"/>
</dbReference>
<dbReference type="Pfam" id="PF01503">
    <property type="entry name" value="PRA-PH"/>
    <property type="match status" value="1"/>
</dbReference>
<dbReference type="SUPFAM" id="SSF101386">
    <property type="entry name" value="all-alpha NTP pyrophosphatases"/>
    <property type="match status" value="1"/>
</dbReference>
<gene>
    <name evidence="1" type="primary">hisE</name>
    <name type="ordered locus">JTY_2133</name>
</gene>
<evidence type="ECO:0000255" key="1">
    <source>
        <dbReference type="HAMAP-Rule" id="MF_01020"/>
    </source>
</evidence>
<sequence length="93" mass="10275">MQQSLAVKTFEDLFAELGDRARTRPADSTTVAALDGGVHALGKKLLEEAGEVWLAAEHESNDALAEEISQLLYWTQVLMISRGLSLDDVYRKL</sequence>
<name>HIS2_MYCBT</name>
<reference key="1">
    <citation type="journal article" date="2009" name="Vaccine">
        <title>Whole genome sequence analysis of Mycobacterium bovis bacillus Calmette-Guerin (BCG) Tokyo 172: a comparative study of BCG vaccine substrains.</title>
        <authorList>
            <person name="Seki M."/>
            <person name="Honda I."/>
            <person name="Fujita I."/>
            <person name="Yano I."/>
            <person name="Yamamoto S."/>
            <person name="Koyama A."/>
        </authorList>
    </citation>
    <scope>NUCLEOTIDE SEQUENCE [LARGE SCALE GENOMIC DNA]</scope>
    <source>
        <strain>BCG / Tokyo 172 / ATCC 35737 / TMC 1019</strain>
    </source>
</reference>
<feature type="chain" id="PRO_1000149056" description="Phosphoribosyl-ATP pyrophosphatase">
    <location>
        <begin position="1"/>
        <end position="93"/>
    </location>
</feature>